<comment type="function">
    <text evidence="1">This protein is involved in the repair of mismatches in DNA. It is required for dam-dependent methyl-directed DNA mismatch repair. May act as a 'molecular matchmaker', a protein that promotes the formation of a stable complex between two or more DNA-binding proteins in an ATP-dependent manner without itself being part of a final effector complex.</text>
</comment>
<comment type="similarity">
    <text evidence="1">Belongs to the DNA mismatch repair MutL/HexB family.</text>
</comment>
<accession>A1SA23</accession>
<dbReference type="EMBL" id="CP000507">
    <property type="protein sequence ID" value="ABM01230.1"/>
    <property type="molecule type" value="Genomic_DNA"/>
</dbReference>
<dbReference type="RefSeq" id="WP_011761134.1">
    <property type="nucleotide sequence ID" value="NC_008700.1"/>
</dbReference>
<dbReference type="SMR" id="A1SA23"/>
<dbReference type="STRING" id="326297.Sama_3027"/>
<dbReference type="KEGG" id="saz:Sama_3027"/>
<dbReference type="eggNOG" id="COG0323">
    <property type="taxonomic scope" value="Bacteria"/>
</dbReference>
<dbReference type="HOGENOM" id="CLU_004131_5_1_6"/>
<dbReference type="OrthoDB" id="9763467at2"/>
<dbReference type="Proteomes" id="UP000009175">
    <property type="component" value="Chromosome"/>
</dbReference>
<dbReference type="GO" id="GO:0032300">
    <property type="term" value="C:mismatch repair complex"/>
    <property type="evidence" value="ECO:0007669"/>
    <property type="project" value="InterPro"/>
</dbReference>
<dbReference type="GO" id="GO:0005524">
    <property type="term" value="F:ATP binding"/>
    <property type="evidence" value="ECO:0007669"/>
    <property type="project" value="InterPro"/>
</dbReference>
<dbReference type="GO" id="GO:0016887">
    <property type="term" value="F:ATP hydrolysis activity"/>
    <property type="evidence" value="ECO:0007669"/>
    <property type="project" value="InterPro"/>
</dbReference>
<dbReference type="GO" id="GO:0140664">
    <property type="term" value="F:ATP-dependent DNA damage sensor activity"/>
    <property type="evidence" value="ECO:0007669"/>
    <property type="project" value="InterPro"/>
</dbReference>
<dbReference type="GO" id="GO:0030983">
    <property type="term" value="F:mismatched DNA binding"/>
    <property type="evidence" value="ECO:0007669"/>
    <property type="project" value="InterPro"/>
</dbReference>
<dbReference type="GO" id="GO:0006298">
    <property type="term" value="P:mismatch repair"/>
    <property type="evidence" value="ECO:0007669"/>
    <property type="project" value="UniProtKB-UniRule"/>
</dbReference>
<dbReference type="CDD" id="cd16926">
    <property type="entry name" value="HATPase_MutL-MLH-PMS-like"/>
    <property type="match status" value="1"/>
</dbReference>
<dbReference type="CDD" id="cd03482">
    <property type="entry name" value="MutL_Trans_MutL"/>
    <property type="match status" value="1"/>
</dbReference>
<dbReference type="FunFam" id="3.30.565.10:FF:000003">
    <property type="entry name" value="DNA mismatch repair endonuclease MutL"/>
    <property type="match status" value="1"/>
</dbReference>
<dbReference type="Gene3D" id="3.30.230.10">
    <property type="match status" value="1"/>
</dbReference>
<dbReference type="Gene3D" id="3.30.565.10">
    <property type="entry name" value="Histidine kinase-like ATPase, C-terminal domain"/>
    <property type="match status" value="1"/>
</dbReference>
<dbReference type="Gene3D" id="3.30.1540.20">
    <property type="entry name" value="MutL, C-terminal domain, dimerisation subdomain"/>
    <property type="match status" value="1"/>
</dbReference>
<dbReference type="Gene3D" id="3.30.1370.100">
    <property type="entry name" value="MutL, C-terminal domain, regulatory subdomain"/>
    <property type="match status" value="1"/>
</dbReference>
<dbReference type="HAMAP" id="MF_00149">
    <property type="entry name" value="DNA_mis_repair"/>
    <property type="match status" value="1"/>
</dbReference>
<dbReference type="InterPro" id="IPR014762">
    <property type="entry name" value="DNA_mismatch_repair_CS"/>
</dbReference>
<dbReference type="InterPro" id="IPR020667">
    <property type="entry name" value="DNA_mismatch_repair_MutL"/>
</dbReference>
<dbReference type="InterPro" id="IPR013507">
    <property type="entry name" value="DNA_mismatch_S5_2-like"/>
</dbReference>
<dbReference type="InterPro" id="IPR036890">
    <property type="entry name" value="HATPase_C_sf"/>
</dbReference>
<dbReference type="InterPro" id="IPR002099">
    <property type="entry name" value="MutL/Mlh/PMS"/>
</dbReference>
<dbReference type="InterPro" id="IPR038973">
    <property type="entry name" value="MutL/Mlh/Pms-like"/>
</dbReference>
<dbReference type="InterPro" id="IPR014790">
    <property type="entry name" value="MutL_C"/>
</dbReference>
<dbReference type="InterPro" id="IPR042120">
    <property type="entry name" value="MutL_C_dimsub"/>
</dbReference>
<dbReference type="InterPro" id="IPR042121">
    <property type="entry name" value="MutL_C_regsub"/>
</dbReference>
<dbReference type="InterPro" id="IPR037198">
    <property type="entry name" value="MutL_C_sf"/>
</dbReference>
<dbReference type="InterPro" id="IPR020568">
    <property type="entry name" value="Ribosomal_Su5_D2-typ_SF"/>
</dbReference>
<dbReference type="InterPro" id="IPR014721">
    <property type="entry name" value="Ribsml_uS5_D2-typ_fold_subgr"/>
</dbReference>
<dbReference type="NCBIfam" id="TIGR00585">
    <property type="entry name" value="mutl"/>
    <property type="match status" value="1"/>
</dbReference>
<dbReference type="NCBIfam" id="NF000948">
    <property type="entry name" value="PRK00095.1-1"/>
    <property type="match status" value="1"/>
</dbReference>
<dbReference type="PANTHER" id="PTHR10073">
    <property type="entry name" value="DNA MISMATCH REPAIR PROTEIN MLH, PMS, MUTL"/>
    <property type="match status" value="1"/>
</dbReference>
<dbReference type="PANTHER" id="PTHR10073:SF12">
    <property type="entry name" value="DNA MISMATCH REPAIR PROTEIN MLH1"/>
    <property type="match status" value="1"/>
</dbReference>
<dbReference type="Pfam" id="PF01119">
    <property type="entry name" value="DNA_mis_repair"/>
    <property type="match status" value="1"/>
</dbReference>
<dbReference type="Pfam" id="PF13589">
    <property type="entry name" value="HATPase_c_3"/>
    <property type="match status" value="1"/>
</dbReference>
<dbReference type="Pfam" id="PF08676">
    <property type="entry name" value="MutL_C"/>
    <property type="match status" value="1"/>
</dbReference>
<dbReference type="SMART" id="SM01340">
    <property type="entry name" value="DNA_mis_repair"/>
    <property type="match status" value="1"/>
</dbReference>
<dbReference type="SMART" id="SM00853">
    <property type="entry name" value="MutL_C"/>
    <property type="match status" value="1"/>
</dbReference>
<dbReference type="SUPFAM" id="SSF55874">
    <property type="entry name" value="ATPase domain of HSP90 chaperone/DNA topoisomerase II/histidine kinase"/>
    <property type="match status" value="1"/>
</dbReference>
<dbReference type="SUPFAM" id="SSF118116">
    <property type="entry name" value="DNA mismatch repair protein MutL"/>
    <property type="match status" value="1"/>
</dbReference>
<dbReference type="SUPFAM" id="SSF54211">
    <property type="entry name" value="Ribosomal protein S5 domain 2-like"/>
    <property type="match status" value="1"/>
</dbReference>
<dbReference type="PROSITE" id="PS00058">
    <property type="entry name" value="DNA_MISMATCH_REPAIR_1"/>
    <property type="match status" value="1"/>
</dbReference>
<protein>
    <recommendedName>
        <fullName evidence="1">DNA mismatch repair protein MutL</fullName>
    </recommendedName>
</protein>
<evidence type="ECO:0000255" key="1">
    <source>
        <dbReference type="HAMAP-Rule" id="MF_00149"/>
    </source>
</evidence>
<evidence type="ECO:0000256" key="2">
    <source>
        <dbReference type="SAM" id="MobiDB-lite"/>
    </source>
</evidence>
<sequence length="650" mass="71717">MAIQVLPPQLANQIAAGEVVERPASVIKELVENSLDAGATRVDIDIDKGGSKLIRIRDNGGGIPKAELALALARHATSKVQTLEDLEAILSFGFRGEALASISSVSRLTLTSRTTEQAEAWQAYAEGSEVAIRVMPAAHPVGTTIEVADLFFNTPARRRFLKSDKTEFTHIDEWLKRIALIRSDVHFSLSHNGKPVRQYRCAATDTQYLQRLAQVAGRAFADSAIKVDCQHDGMGLSGYLQSPALSDMVDCHYFYVNGRLIRDRLVNHAVRQAFGELGTFEQPAFVLSLTLDPHQVDVNVHPAKHEVRFHQARYVHDFILQVLQSALSQMQDLPLAEELPRAQESPASVREHTAGYAPYTFNRDAATEAAGVLSSLPDTQRSQRQPEKAASGQRSSVDAGLSQGSSAHRASQTGLGQSGNAATFETSERHGSGYSGAGQGQRYVRDQLSGQQRQAAQYYAELLHTPEVVSTSGSLQAGLPMPPLLAGRYWVLAQDEHLRLLSISDAAKALVVQEILSKLPTGLVGQPLLMPVAVAADADWTMILAERESLLRRLGLELTIRYQQLIIKKVPPYLRDSQLAKLIPEFLEWIKLEVPADEALCHWLAQYVTGFDAAPKVWQRIQSLEATERNKILESARDLPWQTWLDEYKH</sequence>
<gene>
    <name evidence="1" type="primary">mutL</name>
    <name type="ordered locus">Sama_3027</name>
</gene>
<proteinExistence type="inferred from homology"/>
<keyword id="KW-0227">DNA damage</keyword>
<keyword id="KW-0234">DNA repair</keyword>
<keyword id="KW-1185">Reference proteome</keyword>
<name>MUTL_SHEAM</name>
<reference key="1">
    <citation type="submission" date="2006-12" db="EMBL/GenBank/DDBJ databases">
        <title>Complete sequence of Shewanella amazonensis SB2B.</title>
        <authorList>
            <consortium name="US DOE Joint Genome Institute"/>
            <person name="Copeland A."/>
            <person name="Lucas S."/>
            <person name="Lapidus A."/>
            <person name="Barry K."/>
            <person name="Detter J.C."/>
            <person name="Glavina del Rio T."/>
            <person name="Hammon N."/>
            <person name="Israni S."/>
            <person name="Dalin E."/>
            <person name="Tice H."/>
            <person name="Pitluck S."/>
            <person name="Munk A.C."/>
            <person name="Brettin T."/>
            <person name="Bruce D."/>
            <person name="Han C."/>
            <person name="Tapia R."/>
            <person name="Gilna P."/>
            <person name="Schmutz J."/>
            <person name="Larimer F."/>
            <person name="Land M."/>
            <person name="Hauser L."/>
            <person name="Kyrpides N."/>
            <person name="Mikhailova N."/>
            <person name="Fredrickson J."/>
            <person name="Richardson P."/>
        </authorList>
    </citation>
    <scope>NUCLEOTIDE SEQUENCE [LARGE SCALE GENOMIC DNA]</scope>
    <source>
        <strain>ATCC BAA-1098 / SB2B</strain>
    </source>
</reference>
<organism>
    <name type="scientific">Shewanella amazonensis (strain ATCC BAA-1098 / SB2B)</name>
    <dbReference type="NCBI Taxonomy" id="326297"/>
    <lineage>
        <taxon>Bacteria</taxon>
        <taxon>Pseudomonadati</taxon>
        <taxon>Pseudomonadota</taxon>
        <taxon>Gammaproteobacteria</taxon>
        <taxon>Alteromonadales</taxon>
        <taxon>Shewanellaceae</taxon>
        <taxon>Shewanella</taxon>
    </lineage>
</organism>
<feature type="chain" id="PRO_1000076709" description="DNA mismatch repair protein MutL">
    <location>
        <begin position="1"/>
        <end position="650"/>
    </location>
</feature>
<feature type="region of interest" description="Disordered" evidence="2">
    <location>
        <begin position="374"/>
        <end position="420"/>
    </location>
</feature>
<feature type="compositionally biased region" description="Polar residues" evidence="2">
    <location>
        <begin position="392"/>
        <end position="420"/>
    </location>
</feature>